<feature type="chain" id="PRO_1000098650" description="tRNA dimethylallyltransferase">
    <location>
        <begin position="1"/>
        <end position="325"/>
    </location>
</feature>
<feature type="region of interest" description="Interaction with substrate tRNA" evidence="1">
    <location>
        <begin position="42"/>
        <end position="45"/>
    </location>
</feature>
<feature type="region of interest" description="Interaction with substrate tRNA" evidence="1">
    <location>
        <begin position="166"/>
        <end position="170"/>
    </location>
</feature>
<feature type="region of interest" description="Interaction with substrate tRNA" evidence="1">
    <location>
        <begin position="251"/>
        <end position="256"/>
    </location>
</feature>
<feature type="region of interest" description="Interaction with substrate tRNA" evidence="1">
    <location>
        <begin position="284"/>
        <end position="291"/>
    </location>
</feature>
<feature type="binding site" evidence="1">
    <location>
        <begin position="17"/>
        <end position="24"/>
    </location>
    <ligand>
        <name>ATP</name>
        <dbReference type="ChEBI" id="CHEBI:30616"/>
    </ligand>
</feature>
<feature type="binding site" evidence="1">
    <location>
        <begin position="19"/>
        <end position="24"/>
    </location>
    <ligand>
        <name>substrate</name>
    </ligand>
</feature>
<feature type="site" description="Interaction with substrate tRNA" evidence="1">
    <location>
        <position position="108"/>
    </location>
</feature>
<feature type="site" description="Interaction with substrate tRNA" evidence="1">
    <location>
        <position position="130"/>
    </location>
</feature>
<accession>A9AGA7</accession>
<dbReference type="EC" id="2.5.1.75" evidence="1"/>
<dbReference type="EMBL" id="CP000868">
    <property type="protein sequence ID" value="ABX16306.1"/>
    <property type="molecule type" value="Genomic_DNA"/>
</dbReference>
<dbReference type="EMBL" id="AP009385">
    <property type="protein sequence ID" value="BAG42580.1"/>
    <property type="molecule type" value="Genomic_DNA"/>
</dbReference>
<dbReference type="RefSeq" id="WP_012214071.1">
    <property type="nucleotide sequence ID" value="NC_010084.1"/>
</dbReference>
<dbReference type="SMR" id="A9AGA7"/>
<dbReference type="STRING" id="395019.BMULJ_00616"/>
<dbReference type="KEGG" id="bmj:BMULJ_00616"/>
<dbReference type="KEGG" id="bmu:Bmul_2622"/>
<dbReference type="eggNOG" id="COG0324">
    <property type="taxonomic scope" value="Bacteria"/>
</dbReference>
<dbReference type="HOGENOM" id="CLU_032616_0_0_4"/>
<dbReference type="Proteomes" id="UP000008815">
    <property type="component" value="Chromosome 1"/>
</dbReference>
<dbReference type="GO" id="GO:0005524">
    <property type="term" value="F:ATP binding"/>
    <property type="evidence" value="ECO:0007669"/>
    <property type="project" value="UniProtKB-UniRule"/>
</dbReference>
<dbReference type="GO" id="GO:0052381">
    <property type="term" value="F:tRNA dimethylallyltransferase activity"/>
    <property type="evidence" value="ECO:0007669"/>
    <property type="project" value="UniProtKB-UniRule"/>
</dbReference>
<dbReference type="GO" id="GO:0006400">
    <property type="term" value="P:tRNA modification"/>
    <property type="evidence" value="ECO:0007669"/>
    <property type="project" value="TreeGrafter"/>
</dbReference>
<dbReference type="FunFam" id="1.10.20.140:FF:000001">
    <property type="entry name" value="tRNA dimethylallyltransferase"/>
    <property type="match status" value="1"/>
</dbReference>
<dbReference type="Gene3D" id="1.10.20.140">
    <property type="match status" value="1"/>
</dbReference>
<dbReference type="Gene3D" id="3.40.50.300">
    <property type="entry name" value="P-loop containing nucleotide triphosphate hydrolases"/>
    <property type="match status" value="1"/>
</dbReference>
<dbReference type="HAMAP" id="MF_00185">
    <property type="entry name" value="IPP_trans"/>
    <property type="match status" value="1"/>
</dbReference>
<dbReference type="InterPro" id="IPR039657">
    <property type="entry name" value="Dimethylallyltransferase"/>
</dbReference>
<dbReference type="InterPro" id="IPR018022">
    <property type="entry name" value="IPT"/>
</dbReference>
<dbReference type="InterPro" id="IPR027417">
    <property type="entry name" value="P-loop_NTPase"/>
</dbReference>
<dbReference type="NCBIfam" id="TIGR00174">
    <property type="entry name" value="miaA"/>
    <property type="match status" value="1"/>
</dbReference>
<dbReference type="PANTHER" id="PTHR11088">
    <property type="entry name" value="TRNA DIMETHYLALLYLTRANSFERASE"/>
    <property type="match status" value="1"/>
</dbReference>
<dbReference type="PANTHER" id="PTHR11088:SF60">
    <property type="entry name" value="TRNA DIMETHYLALLYLTRANSFERASE"/>
    <property type="match status" value="1"/>
</dbReference>
<dbReference type="Pfam" id="PF01715">
    <property type="entry name" value="IPPT"/>
    <property type="match status" value="1"/>
</dbReference>
<dbReference type="SUPFAM" id="SSF52540">
    <property type="entry name" value="P-loop containing nucleoside triphosphate hydrolases"/>
    <property type="match status" value="1"/>
</dbReference>
<sequence>MSVSAQSVPTTIACLLGPTASGKTAAALALAARRPIEIVSVDSALVYRDMDIGTAKPTREERARVPHHLIDIIDPADAYSAASFRADTLRLIGEIVARGNTPLLAGGTMLYYKALTQGLNDLPTADPAVRAELDAEAARDGWPALHARLAQIDPATAARLAPNDAQRIQRALEVFMLSGQPMSALLAAPRPADEAAAAYRFVPVALEPSDRAVLHARIAQRFDAMLAAGFIDEVERLRRRDDLHLGLPSMRCVGYRQAWEFLDGDIDYRTMRDKGIFATRQLCKRQITWLRAMPERIVVDCIAPDSTARALDALERVLDGRIAAG</sequence>
<reference key="1">
    <citation type="submission" date="2007-10" db="EMBL/GenBank/DDBJ databases">
        <title>Complete sequence of chromosome 1 of Burkholderia multivorans ATCC 17616.</title>
        <authorList>
            <person name="Copeland A."/>
            <person name="Lucas S."/>
            <person name="Lapidus A."/>
            <person name="Barry K."/>
            <person name="Glavina del Rio T."/>
            <person name="Dalin E."/>
            <person name="Tice H."/>
            <person name="Pitluck S."/>
            <person name="Chain P."/>
            <person name="Malfatti S."/>
            <person name="Shin M."/>
            <person name="Vergez L."/>
            <person name="Schmutz J."/>
            <person name="Larimer F."/>
            <person name="Land M."/>
            <person name="Hauser L."/>
            <person name="Kyrpides N."/>
            <person name="Kim E."/>
            <person name="Tiedje J."/>
            <person name="Richardson P."/>
        </authorList>
    </citation>
    <scope>NUCLEOTIDE SEQUENCE [LARGE SCALE GENOMIC DNA]</scope>
    <source>
        <strain>ATCC 17616 / 249</strain>
    </source>
</reference>
<reference key="2">
    <citation type="submission" date="2007-04" db="EMBL/GenBank/DDBJ databases">
        <title>Complete genome sequence of Burkholderia multivorans ATCC 17616.</title>
        <authorList>
            <person name="Ohtsubo Y."/>
            <person name="Yamashita A."/>
            <person name="Kurokawa K."/>
            <person name="Takami H."/>
            <person name="Yuhara S."/>
            <person name="Nishiyama E."/>
            <person name="Endo R."/>
            <person name="Miyazaki R."/>
            <person name="Ono A."/>
            <person name="Yano K."/>
            <person name="Ito M."/>
            <person name="Sota M."/>
            <person name="Yuji N."/>
            <person name="Hattori M."/>
            <person name="Tsuda M."/>
        </authorList>
    </citation>
    <scope>NUCLEOTIDE SEQUENCE [LARGE SCALE GENOMIC DNA]</scope>
    <source>
        <strain>ATCC 17616 / 249</strain>
    </source>
</reference>
<keyword id="KW-0067">ATP-binding</keyword>
<keyword id="KW-0460">Magnesium</keyword>
<keyword id="KW-0547">Nucleotide-binding</keyword>
<keyword id="KW-1185">Reference proteome</keyword>
<keyword id="KW-0808">Transferase</keyword>
<keyword id="KW-0819">tRNA processing</keyword>
<protein>
    <recommendedName>
        <fullName evidence="1">tRNA dimethylallyltransferase</fullName>
        <ecNumber evidence="1">2.5.1.75</ecNumber>
    </recommendedName>
    <alternativeName>
        <fullName evidence="1">Dimethylallyl diphosphate:tRNA dimethylallyltransferase</fullName>
        <shortName evidence="1">DMAPP:tRNA dimethylallyltransferase</shortName>
        <shortName evidence="1">DMATase</shortName>
    </alternativeName>
    <alternativeName>
        <fullName evidence="1">Isopentenyl-diphosphate:tRNA isopentenyltransferase</fullName>
        <shortName evidence="1">IPP transferase</shortName>
        <shortName evidence="1">IPPT</shortName>
        <shortName evidence="1">IPTase</shortName>
    </alternativeName>
</protein>
<name>MIAA_BURM1</name>
<proteinExistence type="inferred from homology"/>
<comment type="function">
    <text evidence="1">Catalyzes the transfer of a dimethylallyl group onto the adenine at position 37 in tRNAs that read codons beginning with uridine, leading to the formation of N6-(dimethylallyl)adenosine (i(6)A).</text>
</comment>
<comment type="catalytic activity">
    <reaction evidence="1">
        <text>adenosine(37) in tRNA + dimethylallyl diphosphate = N(6)-dimethylallyladenosine(37) in tRNA + diphosphate</text>
        <dbReference type="Rhea" id="RHEA:26482"/>
        <dbReference type="Rhea" id="RHEA-COMP:10162"/>
        <dbReference type="Rhea" id="RHEA-COMP:10375"/>
        <dbReference type="ChEBI" id="CHEBI:33019"/>
        <dbReference type="ChEBI" id="CHEBI:57623"/>
        <dbReference type="ChEBI" id="CHEBI:74411"/>
        <dbReference type="ChEBI" id="CHEBI:74415"/>
        <dbReference type="EC" id="2.5.1.75"/>
    </reaction>
</comment>
<comment type="cofactor">
    <cofactor evidence="1">
        <name>Mg(2+)</name>
        <dbReference type="ChEBI" id="CHEBI:18420"/>
    </cofactor>
</comment>
<comment type="subunit">
    <text evidence="1">Monomer.</text>
</comment>
<comment type="similarity">
    <text evidence="1">Belongs to the IPP transferase family.</text>
</comment>
<evidence type="ECO:0000255" key="1">
    <source>
        <dbReference type="HAMAP-Rule" id="MF_00185"/>
    </source>
</evidence>
<organism>
    <name type="scientific">Burkholderia multivorans (strain ATCC 17616 / 249)</name>
    <dbReference type="NCBI Taxonomy" id="395019"/>
    <lineage>
        <taxon>Bacteria</taxon>
        <taxon>Pseudomonadati</taxon>
        <taxon>Pseudomonadota</taxon>
        <taxon>Betaproteobacteria</taxon>
        <taxon>Burkholderiales</taxon>
        <taxon>Burkholderiaceae</taxon>
        <taxon>Burkholderia</taxon>
        <taxon>Burkholderia cepacia complex</taxon>
    </lineage>
</organism>
<gene>
    <name evidence="1" type="primary">miaA</name>
    <name type="ordered locus">Bmul_2622</name>
    <name type="ordered locus">BMULJ_00616</name>
</gene>